<gene>
    <name evidence="1" type="primary">glpK</name>
    <name type="ordered locus">ABO_0714</name>
</gene>
<proteinExistence type="inferred from homology"/>
<dbReference type="EC" id="2.7.1.30" evidence="1"/>
<dbReference type="EMBL" id="AM286690">
    <property type="protein sequence ID" value="CAL16162.1"/>
    <property type="molecule type" value="Genomic_DNA"/>
</dbReference>
<dbReference type="RefSeq" id="WP_011587999.1">
    <property type="nucleotide sequence ID" value="NC_008260.1"/>
</dbReference>
<dbReference type="SMR" id="Q0VRN6"/>
<dbReference type="STRING" id="393595.ABO_0714"/>
<dbReference type="KEGG" id="abo:ABO_0714"/>
<dbReference type="eggNOG" id="COG0554">
    <property type="taxonomic scope" value="Bacteria"/>
</dbReference>
<dbReference type="HOGENOM" id="CLU_009281_2_3_6"/>
<dbReference type="OrthoDB" id="9805576at2"/>
<dbReference type="UniPathway" id="UPA00618">
    <property type="reaction ID" value="UER00672"/>
</dbReference>
<dbReference type="Proteomes" id="UP000008871">
    <property type="component" value="Chromosome"/>
</dbReference>
<dbReference type="GO" id="GO:0005829">
    <property type="term" value="C:cytosol"/>
    <property type="evidence" value="ECO:0007669"/>
    <property type="project" value="TreeGrafter"/>
</dbReference>
<dbReference type="GO" id="GO:0005524">
    <property type="term" value="F:ATP binding"/>
    <property type="evidence" value="ECO:0007669"/>
    <property type="project" value="UniProtKB-UniRule"/>
</dbReference>
<dbReference type="GO" id="GO:0004370">
    <property type="term" value="F:glycerol kinase activity"/>
    <property type="evidence" value="ECO:0000250"/>
    <property type="project" value="UniProtKB"/>
</dbReference>
<dbReference type="GO" id="GO:0019563">
    <property type="term" value="P:glycerol catabolic process"/>
    <property type="evidence" value="ECO:0007669"/>
    <property type="project" value="UniProtKB-UniRule"/>
</dbReference>
<dbReference type="GO" id="GO:0006071">
    <property type="term" value="P:glycerol metabolic process"/>
    <property type="evidence" value="ECO:0000250"/>
    <property type="project" value="UniProtKB"/>
</dbReference>
<dbReference type="GO" id="GO:0006072">
    <property type="term" value="P:glycerol-3-phosphate metabolic process"/>
    <property type="evidence" value="ECO:0007669"/>
    <property type="project" value="InterPro"/>
</dbReference>
<dbReference type="CDD" id="cd07786">
    <property type="entry name" value="FGGY_EcGK_like"/>
    <property type="match status" value="1"/>
</dbReference>
<dbReference type="FunFam" id="3.30.420.40:FF:000007">
    <property type="entry name" value="Glycerol kinase"/>
    <property type="match status" value="1"/>
</dbReference>
<dbReference type="FunFam" id="3.30.420.40:FF:000008">
    <property type="entry name" value="Glycerol kinase"/>
    <property type="match status" value="1"/>
</dbReference>
<dbReference type="Gene3D" id="3.30.420.40">
    <property type="match status" value="2"/>
</dbReference>
<dbReference type="HAMAP" id="MF_00186">
    <property type="entry name" value="Glycerol_kin"/>
    <property type="match status" value="1"/>
</dbReference>
<dbReference type="InterPro" id="IPR043129">
    <property type="entry name" value="ATPase_NBD"/>
</dbReference>
<dbReference type="InterPro" id="IPR000577">
    <property type="entry name" value="Carb_kinase_FGGY"/>
</dbReference>
<dbReference type="InterPro" id="IPR018483">
    <property type="entry name" value="Carb_kinase_FGGY_CS"/>
</dbReference>
<dbReference type="InterPro" id="IPR018485">
    <property type="entry name" value="FGGY_C"/>
</dbReference>
<dbReference type="InterPro" id="IPR018484">
    <property type="entry name" value="FGGY_N"/>
</dbReference>
<dbReference type="InterPro" id="IPR005999">
    <property type="entry name" value="Glycerol_kin"/>
</dbReference>
<dbReference type="NCBIfam" id="TIGR01311">
    <property type="entry name" value="glycerol_kin"/>
    <property type="match status" value="1"/>
</dbReference>
<dbReference type="NCBIfam" id="NF000756">
    <property type="entry name" value="PRK00047.1"/>
    <property type="match status" value="1"/>
</dbReference>
<dbReference type="PANTHER" id="PTHR10196:SF78">
    <property type="entry name" value="GLYCEROL KINASE"/>
    <property type="match status" value="1"/>
</dbReference>
<dbReference type="PANTHER" id="PTHR10196">
    <property type="entry name" value="SUGAR KINASE"/>
    <property type="match status" value="1"/>
</dbReference>
<dbReference type="Pfam" id="PF02782">
    <property type="entry name" value="FGGY_C"/>
    <property type="match status" value="1"/>
</dbReference>
<dbReference type="Pfam" id="PF00370">
    <property type="entry name" value="FGGY_N"/>
    <property type="match status" value="1"/>
</dbReference>
<dbReference type="PIRSF" id="PIRSF000538">
    <property type="entry name" value="GlpK"/>
    <property type="match status" value="1"/>
</dbReference>
<dbReference type="SUPFAM" id="SSF53067">
    <property type="entry name" value="Actin-like ATPase domain"/>
    <property type="match status" value="2"/>
</dbReference>
<dbReference type="PROSITE" id="PS00933">
    <property type="entry name" value="FGGY_KINASES_1"/>
    <property type="match status" value="1"/>
</dbReference>
<reference key="1">
    <citation type="journal article" date="2006" name="Nat. Biotechnol.">
        <title>Genome sequence of the ubiquitous hydrocarbon-degrading marine bacterium Alcanivorax borkumensis.</title>
        <authorList>
            <person name="Schneiker S."/>
            <person name="Martins dos Santos V.A.P."/>
            <person name="Bartels D."/>
            <person name="Bekel T."/>
            <person name="Brecht M."/>
            <person name="Buhrmester J."/>
            <person name="Chernikova T.N."/>
            <person name="Denaro R."/>
            <person name="Ferrer M."/>
            <person name="Gertler C."/>
            <person name="Goesmann A."/>
            <person name="Golyshina O.V."/>
            <person name="Kaminski F."/>
            <person name="Khachane A.N."/>
            <person name="Lang S."/>
            <person name="Linke B."/>
            <person name="McHardy A.C."/>
            <person name="Meyer F."/>
            <person name="Nechitaylo T."/>
            <person name="Puehler A."/>
            <person name="Regenhardt D."/>
            <person name="Rupp O."/>
            <person name="Sabirova J.S."/>
            <person name="Selbitschka W."/>
            <person name="Yakimov M.M."/>
            <person name="Timmis K.N."/>
            <person name="Vorhoelter F.-J."/>
            <person name="Weidner S."/>
            <person name="Kaiser O."/>
            <person name="Golyshin P.N."/>
        </authorList>
    </citation>
    <scope>NUCLEOTIDE SEQUENCE [LARGE SCALE GENOMIC DNA]</scope>
    <source>
        <strain>ATCC 700651 / DSM 11573 / NCIMB 13689 / SK2</strain>
    </source>
</reference>
<organism>
    <name type="scientific">Alcanivorax borkumensis (strain ATCC 700651 / DSM 11573 / NCIMB 13689 / SK2)</name>
    <dbReference type="NCBI Taxonomy" id="393595"/>
    <lineage>
        <taxon>Bacteria</taxon>
        <taxon>Pseudomonadati</taxon>
        <taxon>Pseudomonadota</taxon>
        <taxon>Gammaproteobacteria</taxon>
        <taxon>Oceanospirillales</taxon>
        <taxon>Alcanivoracaceae</taxon>
        <taxon>Alcanivorax</taxon>
    </lineage>
</organism>
<sequence length="497" mass="54056">MPYILSIDQGTTSSRAIVFDANGHACGQAQKEFRQYFPEDGWVEHDAMEIWNDTLAMCQQALRNARVEAQQLVAIGITNQRETTVLWDRETGDPLARAIVWQDRRTASTCEALRDQGHENQVRSKTGLLLDPYFSATKLAWLLDNVPNARQRAEAGELAFGTIDSWLLWQLTRGKVHATDATNASRTLLFNIHEQCWDEELLTLFNVPASVLPDVRDSAADFGTTCPELLGAAVPVTGIAGDQQAALVGQACFAPGMVKSTYGTGCFMVMNTGEAVESHNRLLTTVGYRLNGKTTYALEGSIFVAGAAIQWLRDGLHLIRDARETEALARRVGSAGGVYLVPAFTGLGAPWWDPHARGALMGLTRDTGIAEVVTAGLEAVCYQSRDLLDAMAADCGTRPTTLRVDGGMVVNNWLSQTLSDVLGVCVDRPVVTETTALGAAYLAGLGVGLYASLESIAEQWRCERGFSPALAEPERQKRYQGWRDAVARVCQTSRGAN</sequence>
<keyword id="KW-0067">ATP-binding</keyword>
<keyword id="KW-0319">Glycerol metabolism</keyword>
<keyword id="KW-0418">Kinase</keyword>
<keyword id="KW-0547">Nucleotide-binding</keyword>
<keyword id="KW-1185">Reference proteome</keyword>
<keyword id="KW-0808">Transferase</keyword>
<comment type="function">
    <text evidence="1">Key enzyme in the regulation of glycerol uptake and metabolism. Catalyzes the phosphorylation of glycerol to yield sn-glycerol 3-phosphate.</text>
</comment>
<comment type="catalytic activity">
    <reaction evidence="1">
        <text>glycerol + ATP = sn-glycerol 3-phosphate + ADP + H(+)</text>
        <dbReference type="Rhea" id="RHEA:21644"/>
        <dbReference type="ChEBI" id="CHEBI:15378"/>
        <dbReference type="ChEBI" id="CHEBI:17754"/>
        <dbReference type="ChEBI" id="CHEBI:30616"/>
        <dbReference type="ChEBI" id="CHEBI:57597"/>
        <dbReference type="ChEBI" id="CHEBI:456216"/>
        <dbReference type="EC" id="2.7.1.30"/>
    </reaction>
</comment>
<comment type="activity regulation">
    <text evidence="1">Inhibited by fructose 1,6-bisphosphate (FBP).</text>
</comment>
<comment type="pathway">
    <text evidence="1">Polyol metabolism; glycerol degradation via glycerol kinase pathway; sn-glycerol 3-phosphate from glycerol: step 1/1.</text>
</comment>
<comment type="similarity">
    <text evidence="1">Belongs to the FGGY kinase family.</text>
</comment>
<feature type="chain" id="PRO_1000020695" description="Glycerol kinase">
    <location>
        <begin position="1"/>
        <end position="497"/>
    </location>
</feature>
<feature type="binding site" evidence="1">
    <location>
        <position position="11"/>
    </location>
    <ligand>
        <name>ADP</name>
        <dbReference type="ChEBI" id="CHEBI:456216"/>
    </ligand>
</feature>
<feature type="binding site" evidence="1">
    <location>
        <position position="11"/>
    </location>
    <ligand>
        <name>ATP</name>
        <dbReference type="ChEBI" id="CHEBI:30616"/>
    </ligand>
</feature>
<feature type="binding site" evidence="1">
    <location>
        <position position="11"/>
    </location>
    <ligand>
        <name>sn-glycerol 3-phosphate</name>
        <dbReference type="ChEBI" id="CHEBI:57597"/>
    </ligand>
</feature>
<feature type="binding site" evidence="1">
    <location>
        <position position="12"/>
    </location>
    <ligand>
        <name>ATP</name>
        <dbReference type="ChEBI" id="CHEBI:30616"/>
    </ligand>
</feature>
<feature type="binding site" evidence="1">
    <location>
        <position position="13"/>
    </location>
    <ligand>
        <name>ATP</name>
        <dbReference type="ChEBI" id="CHEBI:30616"/>
    </ligand>
</feature>
<feature type="binding site" evidence="1">
    <location>
        <position position="15"/>
    </location>
    <ligand>
        <name>ADP</name>
        <dbReference type="ChEBI" id="CHEBI:456216"/>
    </ligand>
</feature>
<feature type="binding site" evidence="1">
    <location>
        <position position="81"/>
    </location>
    <ligand>
        <name>glycerol</name>
        <dbReference type="ChEBI" id="CHEBI:17754"/>
    </ligand>
</feature>
<feature type="binding site" evidence="1">
    <location>
        <position position="81"/>
    </location>
    <ligand>
        <name>sn-glycerol 3-phosphate</name>
        <dbReference type="ChEBI" id="CHEBI:57597"/>
    </ligand>
</feature>
<feature type="binding site" evidence="1">
    <location>
        <position position="82"/>
    </location>
    <ligand>
        <name>glycerol</name>
        <dbReference type="ChEBI" id="CHEBI:17754"/>
    </ligand>
</feature>
<feature type="binding site" evidence="1">
    <location>
        <position position="82"/>
    </location>
    <ligand>
        <name>sn-glycerol 3-phosphate</name>
        <dbReference type="ChEBI" id="CHEBI:57597"/>
    </ligand>
</feature>
<feature type="binding site" evidence="1">
    <location>
        <position position="133"/>
    </location>
    <ligand>
        <name>glycerol</name>
        <dbReference type="ChEBI" id="CHEBI:17754"/>
    </ligand>
</feature>
<feature type="binding site" evidence="1">
    <location>
        <position position="133"/>
    </location>
    <ligand>
        <name>sn-glycerol 3-phosphate</name>
        <dbReference type="ChEBI" id="CHEBI:57597"/>
    </ligand>
</feature>
<feature type="binding site" evidence="1">
    <location>
        <position position="242"/>
    </location>
    <ligand>
        <name>glycerol</name>
        <dbReference type="ChEBI" id="CHEBI:17754"/>
    </ligand>
</feature>
<feature type="binding site" evidence="1">
    <location>
        <position position="242"/>
    </location>
    <ligand>
        <name>sn-glycerol 3-phosphate</name>
        <dbReference type="ChEBI" id="CHEBI:57597"/>
    </ligand>
</feature>
<feature type="binding site" evidence="1">
    <location>
        <position position="243"/>
    </location>
    <ligand>
        <name>glycerol</name>
        <dbReference type="ChEBI" id="CHEBI:17754"/>
    </ligand>
</feature>
<feature type="binding site" evidence="1">
    <location>
        <position position="264"/>
    </location>
    <ligand>
        <name>ADP</name>
        <dbReference type="ChEBI" id="CHEBI:456216"/>
    </ligand>
</feature>
<feature type="binding site" evidence="1">
    <location>
        <position position="264"/>
    </location>
    <ligand>
        <name>ATP</name>
        <dbReference type="ChEBI" id="CHEBI:30616"/>
    </ligand>
</feature>
<feature type="binding site" evidence="1">
    <location>
        <position position="306"/>
    </location>
    <ligand>
        <name>ADP</name>
        <dbReference type="ChEBI" id="CHEBI:456216"/>
    </ligand>
</feature>
<feature type="binding site" evidence="1">
    <location>
        <position position="306"/>
    </location>
    <ligand>
        <name>ATP</name>
        <dbReference type="ChEBI" id="CHEBI:30616"/>
    </ligand>
</feature>
<feature type="binding site" evidence="1">
    <location>
        <position position="310"/>
    </location>
    <ligand>
        <name>ATP</name>
        <dbReference type="ChEBI" id="CHEBI:30616"/>
    </ligand>
</feature>
<feature type="binding site" evidence="1">
    <location>
        <position position="407"/>
    </location>
    <ligand>
        <name>ADP</name>
        <dbReference type="ChEBI" id="CHEBI:456216"/>
    </ligand>
</feature>
<feature type="binding site" evidence="1">
    <location>
        <position position="407"/>
    </location>
    <ligand>
        <name>ATP</name>
        <dbReference type="ChEBI" id="CHEBI:30616"/>
    </ligand>
</feature>
<feature type="binding site" evidence="1">
    <location>
        <position position="411"/>
    </location>
    <ligand>
        <name>ADP</name>
        <dbReference type="ChEBI" id="CHEBI:456216"/>
    </ligand>
</feature>
<protein>
    <recommendedName>
        <fullName evidence="1">Glycerol kinase</fullName>
        <ecNumber evidence="1">2.7.1.30</ecNumber>
    </recommendedName>
    <alternativeName>
        <fullName evidence="1">ATP:glycerol 3-phosphotransferase</fullName>
    </alternativeName>
    <alternativeName>
        <fullName evidence="1">Glycerokinase</fullName>
        <shortName evidence="1">GK</shortName>
    </alternativeName>
</protein>
<evidence type="ECO:0000255" key="1">
    <source>
        <dbReference type="HAMAP-Rule" id="MF_00186"/>
    </source>
</evidence>
<accession>Q0VRN6</accession>
<name>GLPK_ALCBS</name>